<dbReference type="EC" id="3.1.1.31" evidence="1"/>
<dbReference type="EMBL" id="CU928164">
    <property type="protein sequence ID" value="CAR16872.1"/>
    <property type="molecule type" value="Genomic_DNA"/>
</dbReference>
<dbReference type="RefSeq" id="WP_000815454.1">
    <property type="nucleotide sequence ID" value="NC_011750.1"/>
</dbReference>
<dbReference type="RefSeq" id="YP_002406761.1">
    <property type="nucleotide sequence ID" value="NC_011750.1"/>
</dbReference>
<dbReference type="SMR" id="B7NNI9"/>
<dbReference type="STRING" id="585057.ECIAI39_0735"/>
<dbReference type="KEGG" id="ect:ECIAI39_0735"/>
<dbReference type="PATRIC" id="fig|585057.6.peg.778"/>
<dbReference type="HOGENOM" id="CLU_038716_2_0_6"/>
<dbReference type="UniPathway" id="UPA00115">
    <property type="reaction ID" value="UER00409"/>
</dbReference>
<dbReference type="Proteomes" id="UP000000749">
    <property type="component" value="Chromosome"/>
</dbReference>
<dbReference type="GO" id="GO:0005829">
    <property type="term" value="C:cytosol"/>
    <property type="evidence" value="ECO:0007669"/>
    <property type="project" value="TreeGrafter"/>
</dbReference>
<dbReference type="GO" id="GO:0017057">
    <property type="term" value="F:6-phosphogluconolactonase activity"/>
    <property type="evidence" value="ECO:0007669"/>
    <property type="project" value="UniProtKB-UniRule"/>
</dbReference>
<dbReference type="GO" id="GO:0006006">
    <property type="term" value="P:glucose metabolic process"/>
    <property type="evidence" value="ECO:0007669"/>
    <property type="project" value="UniProtKB-KW"/>
</dbReference>
<dbReference type="GO" id="GO:0009051">
    <property type="term" value="P:pentose-phosphate shunt, oxidative branch"/>
    <property type="evidence" value="ECO:0007669"/>
    <property type="project" value="UniProtKB-UniRule"/>
</dbReference>
<dbReference type="FunFam" id="2.130.10.10:FF:000051">
    <property type="entry name" value="6-phosphogluconolactonase"/>
    <property type="match status" value="1"/>
</dbReference>
<dbReference type="Gene3D" id="2.130.10.10">
    <property type="entry name" value="YVTN repeat-like/Quinoprotein amine dehydrogenase"/>
    <property type="match status" value="1"/>
</dbReference>
<dbReference type="HAMAP" id="MF_01605">
    <property type="entry name" value="6P_gluconolactonase"/>
    <property type="match status" value="1"/>
</dbReference>
<dbReference type="InterPro" id="IPR022528">
    <property type="entry name" value="6-phosphogluconolactonase_YbhE"/>
</dbReference>
<dbReference type="InterPro" id="IPR050282">
    <property type="entry name" value="Cycloisomerase_2"/>
</dbReference>
<dbReference type="InterPro" id="IPR019405">
    <property type="entry name" value="Lactonase_7-beta_prop"/>
</dbReference>
<dbReference type="InterPro" id="IPR011045">
    <property type="entry name" value="N2O_reductase_N"/>
</dbReference>
<dbReference type="InterPro" id="IPR015943">
    <property type="entry name" value="WD40/YVTN_repeat-like_dom_sf"/>
</dbReference>
<dbReference type="NCBIfam" id="NF008258">
    <property type="entry name" value="PRK11028.1"/>
    <property type="match status" value="1"/>
</dbReference>
<dbReference type="PANTHER" id="PTHR30344:SF1">
    <property type="entry name" value="6-PHOSPHOGLUCONOLACTONASE"/>
    <property type="match status" value="1"/>
</dbReference>
<dbReference type="PANTHER" id="PTHR30344">
    <property type="entry name" value="6-PHOSPHOGLUCONOLACTONASE-RELATED"/>
    <property type="match status" value="1"/>
</dbReference>
<dbReference type="Pfam" id="PF10282">
    <property type="entry name" value="Lactonase"/>
    <property type="match status" value="1"/>
</dbReference>
<dbReference type="SUPFAM" id="SSF50974">
    <property type="entry name" value="Nitrous oxide reductase, N-terminal domain"/>
    <property type="match status" value="1"/>
</dbReference>
<dbReference type="SUPFAM" id="SSF63825">
    <property type="entry name" value="YWTD domain"/>
    <property type="match status" value="1"/>
</dbReference>
<accession>B7NNI9</accession>
<evidence type="ECO:0000255" key="1">
    <source>
        <dbReference type="HAMAP-Rule" id="MF_01605"/>
    </source>
</evidence>
<organism>
    <name type="scientific">Escherichia coli O7:K1 (strain IAI39 / ExPEC)</name>
    <dbReference type="NCBI Taxonomy" id="585057"/>
    <lineage>
        <taxon>Bacteria</taxon>
        <taxon>Pseudomonadati</taxon>
        <taxon>Pseudomonadota</taxon>
        <taxon>Gammaproteobacteria</taxon>
        <taxon>Enterobacterales</taxon>
        <taxon>Enterobacteriaceae</taxon>
        <taxon>Escherichia</taxon>
    </lineage>
</organism>
<sequence length="331" mass="36390">MKQTVYIASPESQQIHVWNLNHEGVLTLTQVVDVPGQVQPMVVSPDKRYLYVGVRPEFRVLAYRIAPDDGALTFAAESALPGSPTHISTDHHGQFVFVGSYNAGNVSVTRLEDGLPVGVVDVVEGLDGCHSANISPDNRTLWVPALKQDRICLFTVSDDGHLVAQEPAEVTTVEGAGPRHMVFHPNEQYAYCVNELNSSVDVWELKDPHGNIECVQTLDMMPENFSDTRWAADIHITPDGRHLYACDRTASLITVFSVSEDGSVLSKEGFQPTETQQRGFNVDHSGKYLIAAGQKSHHISVYEIVGEQGLLHEKGRYAVGQGPMWVVVNAH</sequence>
<proteinExistence type="inferred from homology"/>
<protein>
    <recommendedName>
        <fullName evidence="1">6-phosphogluconolactonase</fullName>
        <shortName evidence="1">6-P-gluconolactonase</shortName>
        <ecNumber evidence="1">3.1.1.31</ecNumber>
    </recommendedName>
</protein>
<name>6PGL_ECO7I</name>
<gene>
    <name evidence="1" type="primary">pgl</name>
    <name type="ordered locus">ECIAI39_0735</name>
</gene>
<keyword id="KW-0007">Acetylation</keyword>
<keyword id="KW-0119">Carbohydrate metabolism</keyword>
<keyword id="KW-0313">Glucose metabolism</keyword>
<keyword id="KW-0378">Hydrolase</keyword>
<comment type="function">
    <text evidence="1">Catalyzes the hydrolysis of 6-phosphogluconolactone to 6-phosphogluconate.</text>
</comment>
<comment type="catalytic activity">
    <reaction evidence="1">
        <text>6-phospho-D-glucono-1,5-lactone + H2O = 6-phospho-D-gluconate + H(+)</text>
        <dbReference type="Rhea" id="RHEA:12556"/>
        <dbReference type="ChEBI" id="CHEBI:15377"/>
        <dbReference type="ChEBI" id="CHEBI:15378"/>
        <dbReference type="ChEBI" id="CHEBI:57955"/>
        <dbReference type="ChEBI" id="CHEBI:58759"/>
        <dbReference type="EC" id="3.1.1.31"/>
    </reaction>
</comment>
<comment type="pathway">
    <text evidence="1">Carbohydrate degradation; pentose phosphate pathway; D-ribulose 5-phosphate from D-glucose 6-phosphate (oxidative stage): step 2/3.</text>
</comment>
<comment type="similarity">
    <text evidence="1">Belongs to the cycloisomerase 2 family.</text>
</comment>
<reference key="1">
    <citation type="journal article" date="2009" name="PLoS Genet.">
        <title>Organised genome dynamics in the Escherichia coli species results in highly diverse adaptive paths.</title>
        <authorList>
            <person name="Touchon M."/>
            <person name="Hoede C."/>
            <person name="Tenaillon O."/>
            <person name="Barbe V."/>
            <person name="Baeriswyl S."/>
            <person name="Bidet P."/>
            <person name="Bingen E."/>
            <person name="Bonacorsi S."/>
            <person name="Bouchier C."/>
            <person name="Bouvet O."/>
            <person name="Calteau A."/>
            <person name="Chiapello H."/>
            <person name="Clermont O."/>
            <person name="Cruveiller S."/>
            <person name="Danchin A."/>
            <person name="Diard M."/>
            <person name="Dossat C."/>
            <person name="Karoui M.E."/>
            <person name="Frapy E."/>
            <person name="Garry L."/>
            <person name="Ghigo J.M."/>
            <person name="Gilles A.M."/>
            <person name="Johnson J."/>
            <person name="Le Bouguenec C."/>
            <person name="Lescat M."/>
            <person name="Mangenot S."/>
            <person name="Martinez-Jehanne V."/>
            <person name="Matic I."/>
            <person name="Nassif X."/>
            <person name="Oztas S."/>
            <person name="Petit M.A."/>
            <person name="Pichon C."/>
            <person name="Rouy Z."/>
            <person name="Ruf C.S."/>
            <person name="Schneider D."/>
            <person name="Tourret J."/>
            <person name="Vacherie B."/>
            <person name="Vallenet D."/>
            <person name="Medigue C."/>
            <person name="Rocha E.P.C."/>
            <person name="Denamur E."/>
        </authorList>
    </citation>
    <scope>NUCLEOTIDE SEQUENCE [LARGE SCALE GENOMIC DNA]</scope>
    <source>
        <strain>IAI39 / ExPEC</strain>
    </source>
</reference>
<feature type="chain" id="PRO_1000148152" description="6-phosphogluconolactonase">
    <location>
        <begin position="1"/>
        <end position="331"/>
    </location>
</feature>
<feature type="modified residue" description="N6-acetyllysine" evidence="1">
    <location>
        <position position="287"/>
    </location>
</feature>